<sequence length="968" mass="110102">MPFTLGQRWISDTESELGLGTVVALDTRMITLLFPATGENRLYARNDSPITRVMFNPGDTISNHEGWELQVEEVKEENGLLTYIGTRLDTQESGVAMREVLLDSKLTFSKPQDRLFAGQIDRMDRFALRFRARKYQSEQYRLPFAGLRGMRASLIPHQLHIAYEVGQRHAPRVLLADEVGLGKTIEAGMIIHQQLLAGRAERVLIVVPETLQHQWLVEMMRRFNLYFSLFDDSRYSEAKLDSSNPFETEQLVICSLDFVRRNKLRLEELADAQWDLLVVDEAHHLAWSEEAPSREYQVIEQLAEHIPGVLLLTATPEQLGQQSHFARLRLLDPNRFHDYQDFVAEQQKYRPVADAVTLLLSGERLADDKLNLLGELIDEQDIEPLLKAANSDSDNSEQARQELVTMLMDRHGTSRVLFRNTRNGVKGFPHRFLHQIKLPLPTQYQTAIKVSGIMGAKKTVEARARDMLYPEQIYQEFEGENATWWNFDPRVEWLLNYLVANRHEKVLVICAHAATALQLEQVLREREAIRAAVFHEGLSIIERDRAAAYFASEEDGAQVLLCSEIGSEGRNFQFASHLVMFDLPFNPDLLEQRIGRLDRIGQMHDIQIMVPYLENTAQAVLGRWFHEGLDAFEHTCPTGRTIYDSGYEQLIGFLAAPTEQEGLDEFIHHCRQQHDHLKVQLEQGRDRLLEMHSNGGEKAQALAEAIANQDNDVNLVGFALNLFDIVGINQDDRSDNLIVLTPSDHMLVPDFPGLPQDGCTVTFDREQALSREDAQFVSWEHPIIRNGLDLILSGDTGSCAVSLLKNKALPVGTLLVELVYVVEAQAPKHLQLTRFLPPTPIRMLMDRKGTNLAAQVEFESFNRQLNAVNRHTSSKLVNAVQQDVHAMLQQAESLVEEQARALIEQAKQEADDKLSTELARLEALKAVNPNIRDDEVEALEFNRKQVLVNLNEAGWRLDAIRLVVVTHQ</sequence>
<name>RAPA_SERP5</name>
<accession>A8G9P6</accession>
<protein>
    <recommendedName>
        <fullName evidence="1">RNA polymerase-associated protein RapA</fullName>
        <ecNumber evidence="1">3.6.4.-</ecNumber>
    </recommendedName>
    <alternativeName>
        <fullName evidence="1">ATP-dependent helicase HepA</fullName>
    </alternativeName>
</protein>
<dbReference type="EC" id="3.6.4.-" evidence="1"/>
<dbReference type="EMBL" id="CP000826">
    <property type="protein sequence ID" value="ABV39836.1"/>
    <property type="molecule type" value="Genomic_DNA"/>
</dbReference>
<dbReference type="SMR" id="A8G9P6"/>
<dbReference type="STRING" id="399741.Spro_0730"/>
<dbReference type="KEGG" id="spe:Spro_0730"/>
<dbReference type="eggNOG" id="COG0553">
    <property type="taxonomic scope" value="Bacteria"/>
</dbReference>
<dbReference type="HOGENOM" id="CLU_011520_0_0_6"/>
<dbReference type="OrthoDB" id="9814088at2"/>
<dbReference type="GO" id="GO:0005524">
    <property type="term" value="F:ATP binding"/>
    <property type="evidence" value="ECO:0007669"/>
    <property type="project" value="UniProtKB-UniRule"/>
</dbReference>
<dbReference type="GO" id="GO:0003677">
    <property type="term" value="F:DNA binding"/>
    <property type="evidence" value="ECO:0007669"/>
    <property type="project" value="UniProtKB-KW"/>
</dbReference>
<dbReference type="GO" id="GO:0004386">
    <property type="term" value="F:helicase activity"/>
    <property type="evidence" value="ECO:0007669"/>
    <property type="project" value="UniProtKB-UniRule"/>
</dbReference>
<dbReference type="GO" id="GO:0016817">
    <property type="term" value="F:hydrolase activity, acting on acid anhydrides"/>
    <property type="evidence" value="ECO:0007669"/>
    <property type="project" value="InterPro"/>
</dbReference>
<dbReference type="GO" id="GO:0006355">
    <property type="term" value="P:regulation of DNA-templated transcription"/>
    <property type="evidence" value="ECO:0007669"/>
    <property type="project" value="UniProtKB-UniRule"/>
</dbReference>
<dbReference type="CDD" id="cd18011">
    <property type="entry name" value="DEXDc_RapA"/>
    <property type="match status" value="1"/>
</dbReference>
<dbReference type="CDD" id="cd18793">
    <property type="entry name" value="SF2_C_SNF"/>
    <property type="match status" value="1"/>
</dbReference>
<dbReference type="FunFam" id="3.30.360.80:FF:000001">
    <property type="entry name" value="RNA polymerase-associated protein RapA"/>
    <property type="match status" value="1"/>
</dbReference>
<dbReference type="FunFam" id="3.40.50.10810:FF:000012">
    <property type="entry name" value="RNA polymerase-associated protein RapA"/>
    <property type="match status" value="1"/>
</dbReference>
<dbReference type="Gene3D" id="2.30.30.140">
    <property type="match status" value="1"/>
</dbReference>
<dbReference type="Gene3D" id="2.30.30.930">
    <property type="match status" value="1"/>
</dbReference>
<dbReference type="Gene3D" id="3.30.360.80">
    <property type="match status" value="1"/>
</dbReference>
<dbReference type="Gene3D" id="6.10.140.1500">
    <property type="match status" value="1"/>
</dbReference>
<dbReference type="Gene3D" id="6.10.140.2230">
    <property type="match status" value="1"/>
</dbReference>
<dbReference type="Gene3D" id="3.40.50.300">
    <property type="entry name" value="P-loop containing nucleotide triphosphate hydrolases"/>
    <property type="match status" value="1"/>
</dbReference>
<dbReference type="Gene3D" id="3.40.50.10810">
    <property type="entry name" value="Tandem AAA-ATPase domain"/>
    <property type="match status" value="1"/>
</dbReference>
<dbReference type="HAMAP" id="MF_01821">
    <property type="entry name" value="Helicase_RapA"/>
    <property type="match status" value="1"/>
</dbReference>
<dbReference type="InterPro" id="IPR014001">
    <property type="entry name" value="Helicase_ATP-bd"/>
</dbReference>
<dbReference type="InterPro" id="IPR001650">
    <property type="entry name" value="Helicase_C-like"/>
</dbReference>
<dbReference type="InterPro" id="IPR023949">
    <property type="entry name" value="Helicase_RapA"/>
</dbReference>
<dbReference type="InterPro" id="IPR027417">
    <property type="entry name" value="P-loop_NTPase"/>
</dbReference>
<dbReference type="InterPro" id="IPR022737">
    <property type="entry name" value="RapA_C"/>
</dbReference>
<dbReference type="InterPro" id="IPR038718">
    <property type="entry name" value="SNF2-like_sf"/>
</dbReference>
<dbReference type="InterPro" id="IPR049730">
    <property type="entry name" value="SNF2/RAD54-like_C"/>
</dbReference>
<dbReference type="InterPro" id="IPR000330">
    <property type="entry name" value="SNF2_N"/>
</dbReference>
<dbReference type="InterPro" id="IPR040765">
    <property type="entry name" value="Tudor_1_RapA"/>
</dbReference>
<dbReference type="InterPro" id="IPR040766">
    <property type="entry name" value="Tudor_2_RapA"/>
</dbReference>
<dbReference type="NCBIfam" id="NF003426">
    <property type="entry name" value="PRK04914.1"/>
    <property type="match status" value="1"/>
</dbReference>
<dbReference type="PANTHER" id="PTHR45766">
    <property type="entry name" value="DNA ANNEALING HELICASE AND ENDONUCLEASE ZRANB3 FAMILY MEMBER"/>
    <property type="match status" value="1"/>
</dbReference>
<dbReference type="PANTHER" id="PTHR45766:SF6">
    <property type="entry name" value="SWI_SNF-RELATED MATRIX-ASSOCIATED ACTIN-DEPENDENT REGULATOR OF CHROMATIN SUBFAMILY A-LIKE PROTEIN 1"/>
    <property type="match status" value="1"/>
</dbReference>
<dbReference type="Pfam" id="PF00271">
    <property type="entry name" value="Helicase_C"/>
    <property type="match status" value="1"/>
</dbReference>
<dbReference type="Pfam" id="PF12137">
    <property type="entry name" value="RapA_C"/>
    <property type="match status" value="1"/>
</dbReference>
<dbReference type="Pfam" id="PF00176">
    <property type="entry name" value="SNF2-rel_dom"/>
    <property type="match status" value="1"/>
</dbReference>
<dbReference type="Pfam" id="PF18339">
    <property type="entry name" value="Tudor_1_RapA"/>
    <property type="match status" value="1"/>
</dbReference>
<dbReference type="Pfam" id="PF18337">
    <property type="entry name" value="Tudor_RapA"/>
    <property type="match status" value="1"/>
</dbReference>
<dbReference type="SMART" id="SM00487">
    <property type="entry name" value="DEXDc"/>
    <property type="match status" value="1"/>
</dbReference>
<dbReference type="SMART" id="SM00490">
    <property type="entry name" value="HELICc"/>
    <property type="match status" value="1"/>
</dbReference>
<dbReference type="SUPFAM" id="SSF52540">
    <property type="entry name" value="P-loop containing nucleoside triphosphate hydrolases"/>
    <property type="match status" value="2"/>
</dbReference>
<dbReference type="PROSITE" id="PS51192">
    <property type="entry name" value="HELICASE_ATP_BIND_1"/>
    <property type="match status" value="1"/>
</dbReference>
<dbReference type="PROSITE" id="PS51194">
    <property type="entry name" value="HELICASE_CTER"/>
    <property type="match status" value="1"/>
</dbReference>
<evidence type="ECO:0000255" key="1">
    <source>
        <dbReference type="HAMAP-Rule" id="MF_01821"/>
    </source>
</evidence>
<proteinExistence type="inferred from homology"/>
<comment type="function">
    <text evidence="1">Transcription regulator that activates transcription by stimulating RNA polymerase (RNAP) recycling in case of stress conditions such as supercoiled DNA or high salt concentrations. Probably acts by releasing the RNAP, when it is trapped or immobilized on tightly supercoiled DNA. Does not activate transcription on linear DNA. Probably not involved in DNA repair.</text>
</comment>
<comment type="subunit">
    <text evidence="1">Interacts with the RNAP. Has a higher affinity for the core RNAP than for the holoenzyme. Its ATPase activity is stimulated by binding to RNAP.</text>
</comment>
<comment type="similarity">
    <text evidence="1">Belongs to the SNF2/RAD54 helicase family. RapA subfamily.</text>
</comment>
<keyword id="KW-0010">Activator</keyword>
<keyword id="KW-0067">ATP-binding</keyword>
<keyword id="KW-0238">DNA-binding</keyword>
<keyword id="KW-0347">Helicase</keyword>
<keyword id="KW-0378">Hydrolase</keyword>
<keyword id="KW-0547">Nucleotide-binding</keyword>
<keyword id="KW-0804">Transcription</keyword>
<keyword id="KW-0805">Transcription regulation</keyword>
<organism>
    <name type="scientific">Serratia proteamaculans (strain 568)</name>
    <dbReference type="NCBI Taxonomy" id="399741"/>
    <lineage>
        <taxon>Bacteria</taxon>
        <taxon>Pseudomonadati</taxon>
        <taxon>Pseudomonadota</taxon>
        <taxon>Gammaproteobacteria</taxon>
        <taxon>Enterobacterales</taxon>
        <taxon>Yersiniaceae</taxon>
        <taxon>Serratia</taxon>
    </lineage>
</organism>
<feature type="chain" id="PRO_1000088376" description="RNA polymerase-associated protein RapA">
    <location>
        <begin position="1"/>
        <end position="968"/>
    </location>
</feature>
<feature type="domain" description="Helicase ATP-binding" evidence="1">
    <location>
        <begin position="164"/>
        <end position="334"/>
    </location>
</feature>
<feature type="domain" description="Helicase C-terminal" evidence="1">
    <location>
        <begin position="490"/>
        <end position="664"/>
    </location>
</feature>
<feature type="short sequence motif" description="DEAH box">
    <location>
        <begin position="280"/>
        <end position="283"/>
    </location>
</feature>
<feature type="binding site" evidence="1">
    <location>
        <begin position="177"/>
        <end position="184"/>
    </location>
    <ligand>
        <name>ATP</name>
        <dbReference type="ChEBI" id="CHEBI:30616"/>
    </ligand>
</feature>
<gene>
    <name evidence="1" type="primary">rapA</name>
    <name type="ordered locus">Spro_0730</name>
</gene>
<reference key="1">
    <citation type="submission" date="2007-09" db="EMBL/GenBank/DDBJ databases">
        <title>Complete sequence of chromosome of Serratia proteamaculans 568.</title>
        <authorList>
            <consortium name="US DOE Joint Genome Institute"/>
            <person name="Copeland A."/>
            <person name="Lucas S."/>
            <person name="Lapidus A."/>
            <person name="Barry K."/>
            <person name="Glavina del Rio T."/>
            <person name="Dalin E."/>
            <person name="Tice H."/>
            <person name="Pitluck S."/>
            <person name="Chain P."/>
            <person name="Malfatti S."/>
            <person name="Shin M."/>
            <person name="Vergez L."/>
            <person name="Schmutz J."/>
            <person name="Larimer F."/>
            <person name="Land M."/>
            <person name="Hauser L."/>
            <person name="Kyrpides N."/>
            <person name="Kim E."/>
            <person name="Taghavi S."/>
            <person name="Newman L."/>
            <person name="Vangronsveld J."/>
            <person name="van der Lelie D."/>
            <person name="Richardson P."/>
        </authorList>
    </citation>
    <scope>NUCLEOTIDE SEQUENCE [LARGE SCALE GENOMIC DNA]</scope>
    <source>
        <strain>568</strain>
    </source>
</reference>